<evidence type="ECO:0000250" key="1"/>
<evidence type="ECO:0000255" key="2">
    <source>
        <dbReference type="PROSITE-ProRule" id="PRU00031"/>
    </source>
</evidence>
<evidence type="ECO:0000305" key="3"/>
<name>VKTH5_BUNMU</name>
<dbReference type="EMBL" id="AM050153">
    <property type="protein sequence ID" value="CAJ18320.1"/>
    <property type="molecule type" value="Genomic_DNA"/>
</dbReference>
<dbReference type="SMR" id="Q1RPS9"/>
<dbReference type="GO" id="GO:0005615">
    <property type="term" value="C:extracellular space"/>
    <property type="evidence" value="ECO:0007669"/>
    <property type="project" value="TreeGrafter"/>
</dbReference>
<dbReference type="GO" id="GO:0015459">
    <property type="term" value="F:potassium channel regulator activity"/>
    <property type="evidence" value="ECO:0007669"/>
    <property type="project" value="UniProtKB-KW"/>
</dbReference>
<dbReference type="GO" id="GO:0004867">
    <property type="term" value="F:serine-type endopeptidase inhibitor activity"/>
    <property type="evidence" value="ECO:0007669"/>
    <property type="project" value="InterPro"/>
</dbReference>
<dbReference type="GO" id="GO:0090729">
    <property type="term" value="F:toxin activity"/>
    <property type="evidence" value="ECO:0007669"/>
    <property type="project" value="UniProtKB-KW"/>
</dbReference>
<dbReference type="CDD" id="cd22594">
    <property type="entry name" value="Kunitz_textilinin-like"/>
    <property type="match status" value="1"/>
</dbReference>
<dbReference type="FunFam" id="4.10.410.10:FF:000020">
    <property type="entry name" value="Collagen, type VI, alpha 3"/>
    <property type="match status" value="1"/>
</dbReference>
<dbReference type="Gene3D" id="4.10.410.10">
    <property type="entry name" value="Pancreatic trypsin inhibitor Kunitz domain"/>
    <property type="match status" value="1"/>
</dbReference>
<dbReference type="InterPro" id="IPR002223">
    <property type="entry name" value="Kunitz_BPTI"/>
</dbReference>
<dbReference type="InterPro" id="IPR036880">
    <property type="entry name" value="Kunitz_BPTI_sf"/>
</dbReference>
<dbReference type="InterPro" id="IPR020901">
    <property type="entry name" value="Prtase_inh_Kunz-CS"/>
</dbReference>
<dbReference type="InterPro" id="IPR050098">
    <property type="entry name" value="TFPI/VKTCI-like"/>
</dbReference>
<dbReference type="PANTHER" id="PTHR10083:SF383">
    <property type="entry name" value="BPTI_KUNITZ INHIBITOR DOMAIN-CONTAINING PROTEIN"/>
    <property type="match status" value="1"/>
</dbReference>
<dbReference type="PANTHER" id="PTHR10083">
    <property type="entry name" value="KUNITZ-TYPE PROTEASE INHIBITOR-RELATED"/>
    <property type="match status" value="1"/>
</dbReference>
<dbReference type="Pfam" id="PF00014">
    <property type="entry name" value="Kunitz_BPTI"/>
    <property type="match status" value="1"/>
</dbReference>
<dbReference type="PRINTS" id="PR00759">
    <property type="entry name" value="BASICPTASE"/>
</dbReference>
<dbReference type="SMART" id="SM00131">
    <property type="entry name" value="KU"/>
    <property type="match status" value="1"/>
</dbReference>
<dbReference type="SUPFAM" id="SSF57362">
    <property type="entry name" value="BPTI-like"/>
    <property type="match status" value="1"/>
</dbReference>
<dbReference type="PROSITE" id="PS00280">
    <property type="entry name" value="BPTI_KUNITZ_1"/>
    <property type="match status" value="1"/>
</dbReference>
<dbReference type="PROSITE" id="PS50279">
    <property type="entry name" value="BPTI_KUNITZ_2"/>
    <property type="match status" value="1"/>
</dbReference>
<organism>
    <name type="scientific">Bungarus multicinctus</name>
    <name type="common">Many-banded krait</name>
    <dbReference type="NCBI Taxonomy" id="8616"/>
    <lineage>
        <taxon>Eukaryota</taxon>
        <taxon>Metazoa</taxon>
        <taxon>Chordata</taxon>
        <taxon>Craniata</taxon>
        <taxon>Vertebrata</taxon>
        <taxon>Euteleostomi</taxon>
        <taxon>Lepidosauria</taxon>
        <taxon>Squamata</taxon>
        <taxon>Bifurcata</taxon>
        <taxon>Unidentata</taxon>
        <taxon>Episquamata</taxon>
        <taxon>Toxicofera</taxon>
        <taxon>Serpentes</taxon>
        <taxon>Colubroidea</taxon>
        <taxon>Elapidae</taxon>
        <taxon>Bungarinae</taxon>
        <taxon>Bungarus</taxon>
    </lineage>
</organism>
<accession>Q1RPS9</accession>
<keyword id="KW-1015">Disulfide bond</keyword>
<keyword id="KW-0872">Ion channel impairing toxin</keyword>
<keyword id="KW-0528">Neurotoxin</keyword>
<keyword id="KW-0632">Potassium channel impairing toxin</keyword>
<keyword id="KW-0638">Presynaptic neurotoxin</keyword>
<keyword id="KW-0964">Secreted</keyword>
<keyword id="KW-0732">Signal</keyword>
<keyword id="KW-0800">Toxin</keyword>
<keyword id="KW-1220">Voltage-gated potassium channel impairing toxin</keyword>
<proteinExistence type="inferred from homology"/>
<sequence length="83" mass="9108">MSSGGLLLLLGLLTFCAELTPVSSRKRHPYCNLPPDPGPCHDNKFAFYHHPASNKCKEFVYGGCGGNDNRFKTRNKCQCTCSG</sequence>
<reference key="1">
    <citation type="journal article" date="2006" name="Toxicon">
        <title>Divergence of genes encoding B chains of beta-bungarotoxins.</title>
        <authorList>
            <person name="Cheng Y.-C."/>
            <person name="Chen K.-C."/>
            <person name="Lin S.-K."/>
            <person name="Chang L.-S."/>
        </authorList>
    </citation>
    <scope>NUCLEOTIDE SEQUENCE [GENOMIC DNA]</scope>
    <source>
        <tissue>Venom gland</tissue>
    </source>
</reference>
<feature type="signal peptide" evidence="1">
    <location>
        <begin position="1"/>
        <end position="24"/>
    </location>
</feature>
<feature type="chain" id="PRO_5000076283" description="Kunitz-type serine protease inhibitor homolog beta-bungarotoxin B5 chain">
    <location>
        <begin position="25"/>
        <end position="83"/>
    </location>
</feature>
<feature type="domain" description="BPTI/Kunitz inhibitor" evidence="2">
    <location>
        <begin position="31"/>
        <end position="81"/>
    </location>
</feature>
<feature type="disulfide bond" evidence="2">
    <location>
        <begin position="31"/>
        <end position="81"/>
    </location>
</feature>
<feature type="disulfide bond" evidence="2">
    <location>
        <begin position="40"/>
        <end position="64"/>
    </location>
</feature>
<feature type="disulfide bond" evidence="2">
    <location>
        <begin position="56"/>
        <end position="77"/>
    </location>
</feature>
<feature type="disulfide bond" description="Interchain (with an A chain)" evidence="2">
    <location>
        <position position="79"/>
    </location>
</feature>
<comment type="function">
    <text evidence="1">Beta-bungarotoxins are presynaptic neurotoxins of the venom. The B chain is homologous to venom basic protease inhibitors but has no protease inhibitor activity and blocks voltage-gated potassium channels (Kv) (By similarity).</text>
</comment>
<comment type="subunit">
    <text>Heterodimer; disulfide-linked. The A chains have phospholipase A2 activity and the B chains show homology with the basic protease inhibitors.</text>
</comment>
<comment type="subcellular location">
    <subcellularLocation>
        <location evidence="1">Secreted</location>
    </subcellularLocation>
</comment>
<comment type="tissue specificity">
    <text>Expressed by the venom gland.</text>
</comment>
<comment type="similarity">
    <text evidence="3">Belongs to the venom Kunitz-type family.</text>
</comment>
<protein>
    <recommendedName>
        <fullName>Kunitz-type serine protease inhibitor homolog beta-bungarotoxin B5 chain</fullName>
    </recommendedName>
</protein>